<comment type="catalytic activity">
    <reaction evidence="1">
        <text>tRNA(Phe) + L-phenylalanine + ATP = L-phenylalanyl-tRNA(Phe) + AMP + diphosphate + H(+)</text>
        <dbReference type="Rhea" id="RHEA:19413"/>
        <dbReference type="Rhea" id="RHEA-COMP:9668"/>
        <dbReference type="Rhea" id="RHEA-COMP:9699"/>
        <dbReference type="ChEBI" id="CHEBI:15378"/>
        <dbReference type="ChEBI" id="CHEBI:30616"/>
        <dbReference type="ChEBI" id="CHEBI:33019"/>
        <dbReference type="ChEBI" id="CHEBI:58095"/>
        <dbReference type="ChEBI" id="CHEBI:78442"/>
        <dbReference type="ChEBI" id="CHEBI:78531"/>
        <dbReference type="ChEBI" id="CHEBI:456215"/>
        <dbReference type="EC" id="6.1.1.20"/>
    </reaction>
</comment>
<comment type="cofactor">
    <cofactor evidence="1">
        <name>Mg(2+)</name>
        <dbReference type="ChEBI" id="CHEBI:18420"/>
    </cofactor>
    <text evidence="1">Binds 2 magnesium ions per tetramer.</text>
</comment>
<comment type="subunit">
    <text evidence="1">Tetramer of two alpha and two beta subunits.</text>
</comment>
<comment type="subcellular location">
    <subcellularLocation>
        <location evidence="1">Cytoplasm</location>
    </subcellularLocation>
</comment>
<comment type="similarity">
    <text evidence="1">Belongs to the phenylalanyl-tRNA synthetase beta subunit family. Type 1 subfamily.</text>
</comment>
<gene>
    <name evidence="1" type="primary">pheT</name>
    <name type="ordered locus">HCH_04574</name>
</gene>
<reference key="1">
    <citation type="journal article" date="2005" name="Nucleic Acids Res.">
        <title>Genomic blueprint of Hahella chejuensis, a marine microbe producing an algicidal agent.</title>
        <authorList>
            <person name="Jeong H."/>
            <person name="Yim J.H."/>
            <person name="Lee C."/>
            <person name="Choi S.-H."/>
            <person name="Park Y.K."/>
            <person name="Yoon S.H."/>
            <person name="Hur C.-G."/>
            <person name="Kang H.-Y."/>
            <person name="Kim D."/>
            <person name="Lee H.H."/>
            <person name="Park K.H."/>
            <person name="Park S.-H."/>
            <person name="Park H.-S."/>
            <person name="Lee H.K."/>
            <person name="Oh T.K."/>
            <person name="Kim J.F."/>
        </authorList>
    </citation>
    <scope>NUCLEOTIDE SEQUENCE [LARGE SCALE GENOMIC DNA]</scope>
    <source>
        <strain>KCTC 2396</strain>
    </source>
</reference>
<evidence type="ECO:0000255" key="1">
    <source>
        <dbReference type="HAMAP-Rule" id="MF_00283"/>
    </source>
</evidence>
<protein>
    <recommendedName>
        <fullName evidence="1">Phenylalanine--tRNA ligase beta subunit</fullName>
        <ecNumber evidence="1">6.1.1.20</ecNumber>
    </recommendedName>
    <alternativeName>
        <fullName evidence="1">Phenylalanyl-tRNA synthetase beta subunit</fullName>
        <shortName evidence="1">PheRS</shortName>
    </alternativeName>
</protein>
<dbReference type="EC" id="6.1.1.20" evidence="1"/>
<dbReference type="EMBL" id="CP000155">
    <property type="protein sequence ID" value="ABC31277.1"/>
    <property type="molecule type" value="Genomic_DNA"/>
</dbReference>
<dbReference type="RefSeq" id="WP_011398342.1">
    <property type="nucleotide sequence ID" value="NC_007645.1"/>
</dbReference>
<dbReference type="SMR" id="Q2SDJ7"/>
<dbReference type="STRING" id="349521.HCH_04574"/>
<dbReference type="KEGG" id="hch:HCH_04574"/>
<dbReference type="eggNOG" id="COG0072">
    <property type="taxonomic scope" value="Bacteria"/>
</dbReference>
<dbReference type="eggNOG" id="COG0073">
    <property type="taxonomic scope" value="Bacteria"/>
</dbReference>
<dbReference type="HOGENOM" id="CLU_016891_0_0_6"/>
<dbReference type="OrthoDB" id="9805455at2"/>
<dbReference type="Proteomes" id="UP000000238">
    <property type="component" value="Chromosome"/>
</dbReference>
<dbReference type="GO" id="GO:0009328">
    <property type="term" value="C:phenylalanine-tRNA ligase complex"/>
    <property type="evidence" value="ECO:0007669"/>
    <property type="project" value="TreeGrafter"/>
</dbReference>
<dbReference type="GO" id="GO:0005524">
    <property type="term" value="F:ATP binding"/>
    <property type="evidence" value="ECO:0007669"/>
    <property type="project" value="UniProtKB-UniRule"/>
</dbReference>
<dbReference type="GO" id="GO:0000287">
    <property type="term" value="F:magnesium ion binding"/>
    <property type="evidence" value="ECO:0007669"/>
    <property type="project" value="UniProtKB-UniRule"/>
</dbReference>
<dbReference type="GO" id="GO:0004826">
    <property type="term" value="F:phenylalanine-tRNA ligase activity"/>
    <property type="evidence" value="ECO:0007669"/>
    <property type="project" value="UniProtKB-UniRule"/>
</dbReference>
<dbReference type="GO" id="GO:0000049">
    <property type="term" value="F:tRNA binding"/>
    <property type="evidence" value="ECO:0007669"/>
    <property type="project" value="UniProtKB-KW"/>
</dbReference>
<dbReference type="GO" id="GO:0006432">
    <property type="term" value="P:phenylalanyl-tRNA aminoacylation"/>
    <property type="evidence" value="ECO:0007669"/>
    <property type="project" value="UniProtKB-UniRule"/>
</dbReference>
<dbReference type="CDD" id="cd00769">
    <property type="entry name" value="PheRS_beta_core"/>
    <property type="match status" value="1"/>
</dbReference>
<dbReference type="CDD" id="cd02796">
    <property type="entry name" value="tRNA_bind_bactPheRS"/>
    <property type="match status" value="1"/>
</dbReference>
<dbReference type="FunFam" id="2.40.50.140:FF:000045">
    <property type="entry name" value="Phenylalanine--tRNA ligase beta subunit"/>
    <property type="match status" value="1"/>
</dbReference>
<dbReference type="FunFam" id="3.30.56.10:FF:000002">
    <property type="entry name" value="Phenylalanine--tRNA ligase beta subunit"/>
    <property type="match status" value="1"/>
</dbReference>
<dbReference type="FunFam" id="3.30.70.380:FF:000001">
    <property type="entry name" value="Phenylalanine--tRNA ligase beta subunit"/>
    <property type="match status" value="1"/>
</dbReference>
<dbReference type="FunFam" id="3.30.930.10:FF:000022">
    <property type="entry name" value="Phenylalanine--tRNA ligase beta subunit"/>
    <property type="match status" value="1"/>
</dbReference>
<dbReference type="FunFam" id="3.50.40.10:FF:000001">
    <property type="entry name" value="Phenylalanine--tRNA ligase beta subunit"/>
    <property type="match status" value="1"/>
</dbReference>
<dbReference type="Gene3D" id="3.30.56.10">
    <property type="match status" value="2"/>
</dbReference>
<dbReference type="Gene3D" id="3.30.930.10">
    <property type="entry name" value="Bira Bifunctional Protein, Domain 2"/>
    <property type="match status" value="1"/>
</dbReference>
<dbReference type="Gene3D" id="3.30.70.380">
    <property type="entry name" value="Ferrodoxin-fold anticodon-binding domain"/>
    <property type="match status" value="1"/>
</dbReference>
<dbReference type="Gene3D" id="2.40.50.140">
    <property type="entry name" value="Nucleic acid-binding proteins"/>
    <property type="match status" value="1"/>
</dbReference>
<dbReference type="Gene3D" id="3.50.40.10">
    <property type="entry name" value="Phenylalanyl-trna Synthetase, Chain B, domain 3"/>
    <property type="match status" value="1"/>
</dbReference>
<dbReference type="HAMAP" id="MF_00283">
    <property type="entry name" value="Phe_tRNA_synth_beta1"/>
    <property type="match status" value="1"/>
</dbReference>
<dbReference type="InterPro" id="IPR045864">
    <property type="entry name" value="aa-tRNA-synth_II/BPL/LPL"/>
</dbReference>
<dbReference type="InterPro" id="IPR005146">
    <property type="entry name" value="B3/B4_tRNA-bd"/>
</dbReference>
<dbReference type="InterPro" id="IPR009061">
    <property type="entry name" value="DNA-bd_dom_put_sf"/>
</dbReference>
<dbReference type="InterPro" id="IPR005121">
    <property type="entry name" value="Fdx_antiC-bd"/>
</dbReference>
<dbReference type="InterPro" id="IPR036690">
    <property type="entry name" value="Fdx_antiC-bd_sf"/>
</dbReference>
<dbReference type="InterPro" id="IPR012340">
    <property type="entry name" value="NA-bd_OB-fold"/>
</dbReference>
<dbReference type="InterPro" id="IPR045060">
    <property type="entry name" value="Phe-tRNA-ligase_IIc_bsu"/>
</dbReference>
<dbReference type="InterPro" id="IPR004532">
    <property type="entry name" value="Phe-tRNA-ligase_IIc_bsu_bact"/>
</dbReference>
<dbReference type="InterPro" id="IPR020825">
    <property type="entry name" value="Phe-tRNA_synthase-like_B3/B4"/>
</dbReference>
<dbReference type="InterPro" id="IPR041616">
    <property type="entry name" value="PheRS_beta_core"/>
</dbReference>
<dbReference type="InterPro" id="IPR002547">
    <property type="entry name" value="tRNA-bd_dom"/>
</dbReference>
<dbReference type="InterPro" id="IPR033714">
    <property type="entry name" value="tRNA_bind_bactPheRS"/>
</dbReference>
<dbReference type="InterPro" id="IPR005147">
    <property type="entry name" value="tRNA_synthase_B5-dom"/>
</dbReference>
<dbReference type="NCBIfam" id="TIGR00472">
    <property type="entry name" value="pheT_bact"/>
    <property type="match status" value="1"/>
</dbReference>
<dbReference type="NCBIfam" id="NF045760">
    <property type="entry name" value="YtpR"/>
    <property type="match status" value="1"/>
</dbReference>
<dbReference type="PANTHER" id="PTHR10947:SF0">
    <property type="entry name" value="PHENYLALANINE--TRNA LIGASE BETA SUBUNIT"/>
    <property type="match status" value="1"/>
</dbReference>
<dbReference type="PANTHER" id="PTHR10947">
    <property type="entry name" value="PHENYLALANYL-TRNA SYNTHETASE BETA CHAIN AND LEUCINE-RICH REPEAT-CONTAINING PROTEIN 47"/>
    <property type="match status" value="1"/>
</dbReference>
<dbReference type="Pfam" id="PF03483">
    <property type="entry name" value="B3_4"/>
    <property type="match status" value="1"/>
</dbReference>
<dbReference type="Pfam" id="PF03484">
    <property type="entry name" value="B5"/>
    <property type="match status" value="1"/>
</dbReference>
<dbReference type="Pfam" id="PF03147">
    <property type="entry name" value="FDX-ACB"/>
    <property type="match status" value="1"/>
</dbReference>
<dbReference type="Pfam" id="PF01588">
    <property type="entry name" value="tRNA_bind"/>
    <property type="match status" value="1"/>
</dbReference>
<dbReference type="Pfam" id="PF17759">
    <property type="entry name" value="tRNA_synthFbeta"/>
    <property type="match status" value="1"/>
</dbReference>
<dbReference type="SMART" id="SM00873">
    <property type="entry name" value="B3_4"/>
    <property type="match status" value="1"/>
</dbReference>
<dbReference type="SMART" id="SM00874">
    <property type="entry name" value="B5"/>
    <property type="match status" value="1"/>
</dbReference>
<dbReference type="SMART" id="SM00896">
    <property type="entry name" value="FDX-ACB"/>
    <property type="match status" value="1"/>
</dbReference>
<dbReference type="SUPFAM" id="SSF54991">
    <property type="entry name" value="Anticodon-binding domain of PheRS"/>
    <property type="match status" value="1"/>
</dbReference>
<dbReference type="SUPFAM" id="SSF55681">
    <property type="entry name" value="Class II aaRS and biotin synthetases"/>
    <property type="match status" value="1"/>
</dbReference>
<dbReference type="SUPFAM" id="SSF50249">
    <property type="entry name" value="Nucleic acid-binding proteins"/>
    <property type="match status" value="1"/>
</dbReference>
<dbReference type="SUPFAM" id="SSF56037">
    <property type="entry name" value="PheT/TilS domain"/>
    <property type="match status" value="1"/>
</dbReference>
<dbReference type="SUPFAM" id="SSF46955">
    <property type="entry name" value="Putative DNA-binding domain"/>
    <property type="match status" value="1"/>
</dbReference>
<dbReference type="PROSITE" id="PS51483">
    <property type="entry name" value="B5"/>
    <property type="match status" value="1"/>
</dbReference>
<dbReference type="PROSITE" id="PS51447">
    <property type="entry name" value="FDX_ACB"/>
    <property type="match status" value="1"/>
</dbReference>
<dbReference type="PROSITE" id="PS50886">
    <property type="entry name" value="TRBD"/>
    <property type="match status" value="1"/>
</dbReference>
<keyword id="KW-0030">Aminoacyl-tRNA synthetase</keyword>
<keyword id="KW-0067">ATP-binding</keyword>
<keyword id="KW-0963">Cytoplasm</keyword>
<keyword id="KW-0436">Ligase</keyword>
<keyword id="KW-0460">Magnesium</keyword>
<keyword id="KW-0479">Metal-binding</keyword>
<keyword id="KW-0547">Nucleotide-binding</keyword>
<keyword id="KW-0648">Protein biosynthesis</keyword>
<keyword id="KW-1185">Reference proteome</keyword>
<keyword id="KW-0694">RNA-binding</keyword>
<keyword id="KW-0820">tRNA-binding</keyword>
<name>SYFB_HAHCH</name>
<organism>
    <name type="scientific">Hahella chejuensis (strain KCTC 2396)</name>
    <dbReference type="NCBI Taxonomy" id="349521"/>
    <lineage>
        <taxon>Bacteria</taxon>
        <taxon>Pseudomonadati</taxon>
        <taxon>Pseudomonadota</taxon>
        <taxon>Gammaproteobacteria</taxon>
        <taxon>Oceanospirillales</taxon>
        <taxon>Hahellaceae</taxon>
        <taxon>Hahella</taxon>
    </lineage>
</organism>
<sequence>MKFSEYWLREWVDPQLSSEALVQQITMAGLEVDAAERVAKPFSGIVVGEVLSVEPHPDADKLRVCKVSDGQEEFQVVCGAPNVAAGMKVPFAKIGAVLSGDFKIKKAKLRGVESQGMLCSEEELTLAEKSDGLMPLAADAPVGVDVRSYLKLDDNIIDVDLTPNRSDCLSILGMAREVAALNKIPFEAPEVKKTAAVIDDVFPVRVEAPEACPRYVGRVIKGVDLSAPTPQWMVEKLRRSGIRSIDAVVDVTNFVMIELGQPMHAFDLNELADGIVVRMPTPGEKLVLLDGQEITINPDTLVIADNEKPLALAGVMGGEHSGVSEKTKDIFLESAFFAPLHLAGKARSYGLHTDSSHRFERGVDYAHQARAIERATELLLEIVGGQPGPVTEICSKEHLPAKALVNLRHARVDELLGVHLDRTRVEEMLARLGLGVHKVAKDGWTFSAPTHRFDISIEVDLIEEVARLYGYNKLPVTEPMAPLGIKPLPESKVSLRRLKLHLVSRGYQEAITYTFVDQKVLSLLTPEEDTITLANPIASDMAAMRTTLWAGLLQTALYNQNRQQNRIRLFESGLRFLKRGGQIQQDPMLAGLIMGASMPEGWESKKRTVDFYDVKGDLESLLEIPGCNLSFRSAQHPALHPGQTAEVLKDGQPIGVLGALHPRIAKTLNLNGPLYLFELCLNSIADGQVPSFKGVSRFPEIRRDLAIVIDEQTPYADVALAIAQSAGEWRVHHELFDVYHGESVGADKKSLAISIVWRHPERTLRDEEITEAFDNVVKELGNRFGASLRS</sequence>
<feature type="chain" id="PRO_0000232801" description="Phenylalanine--tRNA ligase beta subunit">
    <location>
        <begin position="1"/>
        <end position="790"/>
    </location>
</feature>
<feature type="domain" description="tRNA-binding" evidence="1">
    <location>
        <begin position="39"/>
        <end position="147"/>
    </location>
</feature>
<feature type="domain" description="B5" evidence="1">
    <location>
        <begin position="400"/>
        <end position="476"/>
    </location>
</feature>
<feature type="domain" description="FDX-ACB" evidence="1">
    <location>
        <begin position="696"/>
        <end position="789"/>
    </location>
</feature>
<feature type="binding site" evidence="1">
    <location>
        <position position="454"/>
    </location>
    <ligand>
        <name>Mg(2+)</name>
        <dbReference type="ChEBI" id="CHEBI:18420"/>
        <note>shared with alpha subunit</note>
    </ligand>
</feature>
<feature type="binding site" evidence="1">
    <location>
        <position position="460"/>
    </location>
    <ligand>
        <name>Mg(2+)</name>
        <dbReference type="ChEBI" id="CHEBI:18420"/>
        <note>shared with alpha subunit</note>
    </ligand>
</feature>
<feature type="binding site" evidence="1">
    <location>
        <position position="463"/>
    </location>
    <ligand>
        <name>Mg(2+)</name>
        <dbReference type="ChEBI" id="CHEBI:18420"/>
        <note>shared with alpha subunit</note>
    </ligand>
</feature>
<feature type="binding site" evidence="1">
    <location>
        <position position="464"/>
    </location>
    <ligand>
        <name>Mg(2+)</name>
        <dbReference type="ChEBI" id="CHEBI:18420"/>
        <note>shared with alpha subunit</note>
    </ligand>
</feature>
<accession>Q2SDJ7</accession>
<proteinExistence type="inferred from homology"/>